<evidence type="ECO:0000255" key="1">
    <source>
        <dbReference type="HAMAP-Rule" id="MF_00191"/>
    </source>
</evidence>
<protein>
    <recommendedName>
        <fullName evidence="1">4-hydroxy-3-methylbut-2-enyl diphosphate reductase</fullName>
        <shortName evidence="1">HMBPP reductase</shortName>
        <ecNumber evidence="1">1.17.7.4</ecNumber>
    </recommendedName>
</protein>
<proteinExistence type="inferred from homology"/>
<accession>A5GIF7</accession>
<keyword id="KW-0004">4Fe-4S</keyword>
<keyword id="KW-0408">Iron</keyword>
<keyword id="KW-0411">Iron-sulfur</keyword>
<keyword id="KW-0414">Isoprene biosynthesis</keyword>
<keyword id="KW-0479">Metal-binding</keyword>
<keyword id="KW-0560">Oxidoreductase</keyword>
<keyword id="KW-1185">Reference proteome</keyword>
<gene>
    <name evidence="1" type="primary">ispH</name>
    <name type="ordered locus">SynWH7803_0296</name>
</gene>
<dbReference type="EC" id="1.17.7.4" evidence="1"/>
<dbReference type="EMBL" id="CT971583">
    <property type="protein sequence ID" value="CAK22722.1"/>
    <property type="molecule type" value="Genomic_DNA"/>
</dbReference>
<dbReference type="SMR" id="A5GIF7"/>
<dbReference type="STRING" id="32051.SynWH7803_0296"/>
<dbReference type="KEGG" id="syx:SynWH7803_0296"/>
<dbReference type="eggNOG" id="COG0761">
    <property type="taxonomic scope" value="Bacteria"/>
</dbReference>
<dbReference type="HOGENOM" id="CLU_027486_4_0_3"/>
<dbReference type="OrthoDB" id="9804077at2"/>
<dbReference type="UniPathway" id="UPA00056">
    <property type="reaction ID" value="UER00097"/>
</dbReference>
<dbReference type="UniPathway" id="UPA00059">
    <property type="reaction ID" value="UER00105"/>
</dbReference>
<dbReference type="Proteomes" id="UP000001566">
    <property type="component" value="Chromosome"/>
</dbReference>
<dbReference type="GO" id="GO:0051539">
    <property type="term" value="F:4 iron, 4 sulfur cluster binding"/>
    <property type="evidence" value="ECO:0007669"/>
    <property type="project" value="UniProtKB-UniRule"/>
</dbReference>
<dbReference type="GO" id="GO:0051745">
    <property type="term" value="F:4-hydroxy-3-methylbut-2-enyl diphosphate reductase activity"/>
    <property type="evidence" value="ECO:0007669"/>
    <property type="project" value="UniProtKB-UniRule"/>
</dbReference>
<dbReference type="GO" id="GO:0046872">
    <property type="term" value="F:metal ion binding"/>
    <property type="evidence" value="ECO:0007669"/>
    <property type="project" value="UniProtKB-KW"/>
</dbReference>
<dbReference type="GO" id="GO:0050992">
    <property type="term" value="P:dimethylallyl diphosphate biosynthetic process"/>
    <property type="evidence" value="ECO:0007669"/>
    <property type="project" value="UniProtKB-UniRule"/>
</dbReference>
<dbReference type="GO" id="GO:0019288">
    <property type="term" value="P:isopentenyl diphosphate biosynthetic process, methylerythritol 4-phosphate pathway"/>
    <property type="evidence" value="ECO:0007669"/>
    <property type="project" value="UniProtKB-UniRule"/>
</dbReference>
<dbReference type="GO" id="GO:0016114">
    <property type="term" value="P:terpenoid biosynthetic process"/>
    <property type="evidence" value="ECO:0007669"/>
    <property type="project" value="UniProtKB-UniRule"/>
</dbReference>
<dbReference type="CDD" id="cd13944">
    <property type="entry name" value="lytB_ispH"/>
    <property type="match status" value="1"/>
</dbReference>
<dbReference type="Gene3D" id="3.40.50.11270">
    <property type="match status" value="1"/>
</dbReference>
<dbReference type="Gene3D" id="3.40.1010.20">
    <property type="entry name" value="4-hydroxy-3-methylbut-2-enyl diphosphate reductase, catalytic domain"/>
    <property type="match status" value="2"/>
</dbReference>
<dbReference type="HAMAP" id="MF_00191">
    <property type="entry name" value="IspH"/>
    <property type="match status" value="1"/>
</dbReference>
<dbReference type="InterPro" id="IPR003451">
    <property type="entry name" value="LytB/IspH"/>
</dbReference>
<dbReference type="NCBIfam" id="TIGR00216">
    <property type="entry name" value="ispH_lytB"/>
    <property type="match status" value="1"/>
</dbReference>
<dbReference type="NCBIfam" id="NF009911">
    <property type="entry name" value="PRK13371.1"/>
    <property type="match status" value="1"/>
</dbReference>
<dbReference type="PANTHER" id="PTHR31619">
    <property type="entry name" value="4-HYDROXY-3-METHYLBUT-2-ENYL DIPHOSPHATE REDUCTASE, CHLOROPLASTIC"/>
    <property type="match status" value="1"/>
</dbReference>
<dbReference type="PANTHER" id="PTHR31619:SF5">
    <property type="entry name" value="4-HYDROXY-3-METHYLBUT-2-ENYL DIPHOSPHATE REDUCTASE, CHLOROPLASTIC"/>
    <property type="match status" value="1"/>
</dbReference>
<dbReference type="Pfam" id="PF02401">
    <property type="entry name" value="LYTB"/>
    <property type="match status" value="1"/>
</dbReference>
<comment type="function">
    <text evidence="1">Catalyzes the conversion of 1-hydroxy-2-methyl-2-(E)-butenyl 4-diphosphate (HMBPP) into a mixture of isopentenyl diphosphate (IPP) and dimethylallyl diphosphate (DMAPP). Acts in the terminal step of the DOXP/MEP pathway for isoprenoid precursor biosynthesis.</text>
</comment>
<comment type="catalytic activity">
    <reaction evidence="1">
        <text>isopentenyl diphosphate + 2 oxidized [2Fe-2S]-[ferredoxin] + H2O = (2E)-4-hydroxy-3-methylbut-2-enyl diphosphate + 2 reduced [2Fe-2S]-[ferredoxin] + 2 H(+)</text>
        <dbReference type="Rhea" id="RHEA:24488"/>
        <dbReference type="Rhea" id="RHEA-COMP:10000"/>
        <dbReference type="Rhea" id="RHEA-COMP:10001"/>
        <dbReference type="ChEBI" id="CHEBI:15377"/>
        <dbReference type="ChEBI" id="CHEBI:15378"/>
        <dbReference type="ChEBI" id="CHEBI:33737"/>
        <dbReference type="ChEBI" id="CHEBI:33738"/>
        <dbReference type="ChEBI" id="CHEBI:128753"/>
        <dbReference type="ChEBI" id="CHEBI:128769"/>
        <dbReference type="EC" id="1.17.7.4"/>
    </reaction>
</comment>
<comment type="catalytic activity">
    <reaction evidence="1">
        <text>dimethylallyl diphosphate + 2 oxidized [2Fe-2S]-[ferredoxin] + H2O = (2E)-4-hydroxy-3-methylbut-2-enyl diphosphate + 2 reduced [2Fe-2S]-[ferredoxin] + 2 H(+)</text>
        <dbReference type="Rhea" id="RHEA:24825"/>
        <dbReference type="Rhea" id="RHEA-COMP:10000"/>
        <dbReference type="Rhea" id="RHEA-COMP:10001"/>
        <dbReference type="ChEBI" id="CHEBI:15377"/>
        <dbReference type="ChEBI" id="CHEBI:15378"/>
        <dbReference type="ChEBI" id="CHEBI:33737"/>
        <dbReference type="ChEBI" id="CHEBI:33738"/>
        <dbReference type="ChEBI" id="CHEBI:57623"/>
        <dbReference type="ChEBI" id="CHEBI:128753"/>
        <dbReference type="EC" id="1.17.7.4"/>
    </reaction>
</comment>
<comment type="cofactor">
    <cofactor evidence="1">
        <name>[4Fe-4S] cluster</name>
        <dbReference type="ChEBI" id="CHEBI:49883"/>
    </cofactor>
    <text evidence="1">Binds 1 [4Fe-4S] cluster per subunit.</text>
</comment>
<comment type="pathway">
    <text evidence="1">Isoprenoid biosynthesis; dimethylallyl diphosphate biosynthesis; dimethylallyl diphosphate from (2E)-4-hydroxy-3-methylbutenyl diphosphate: step 1/1.</text>
</comment>
<comment type="pathway">
    <text evidence="1">Isoprenoid biosynthesis; isopentenyl diphosphate biosynthesis via DXP pathway; isopentenyl diphosphate from 1-deoxy-D-xylulose 5-phosphate: step 6/6.</text>
</comment>
<comment type="similarity">
    <text evidence="1">Belongs to the IspH family.</text>
</comment>
<sequence length="399" mass="44952">MDTHAFKRSLHHSDRYNRRGFGRAEEVAGSLEQAYQSSLIGSIRDNGYRLNHGRLQVRLAKDFGFCWGVERAVAMAYETRKHYPSERLWITNEIIHNPSVNDHLREMNVQFIPVEQGVKDFSGVTSGDVVILPAFGATVQEMQLLNERGCHIVDTTCPWVSKVWNTVEKHKKQTFTSIIHGKVKHEETLATSSFAGTYLVVLDLEEAQIVADYILGNGDRDSFMARFSKACSPGFDPDQDLEKLGVANQTTMLKRETEEIGRLFERTMLSKFGPTQLNEHFLAFNTICDATQERQDAMFSLVDEPLDLMVVIGGYNSSNTTHLQEIAINRGIRSFHIDTPERISADNSIEHKPLGQELIRELEFLPSGTVTVGITSGASTPDRVVEHVIQRLISLSEEN</sequence>
<name>ISPH_SYNPW</name>
<feature type="chain" id="PRO_1000021185" description="4-hydroxy-3-methylbut-2-enyl diphosphate reductase">
    <location>
        <begin position="1"/>
        <end position="399"/>
    </location>
</feature>
<feature type="active site" description="Proton donor" evidence="1">
    <location>
        <position position="187"/>
    </location>
</feature>
<feature type="binding site" evidence="1">
    <location>
        <position position="66"/>
    </location>
    <ligand>
        <name>[4Fe-4S] cluster</name>
        <dbReference type="ChEBI" id="CHEBI:49883"/>
    </ligand>
</feature>
<feature type="binding site" evidence="1">
    <location>
        <position position="96"/>
    </location>
    <ligand>
        <name>(2E)-4-hydroxy-3-methylbut-2-enyl diphosphate</name>
        <dbReference type="ChEBI" id="CHEBI:128753"/>
    </ligand>
</feature>
<feature type="binding site" evidence="1">
    <location>
        <position position="96"/>
    </location>
    <ligand>
        <name>dimethylallyl diphosphate</name>
        <dbReference type="ChEBI" id="CHEBI:57623"/>
    </ligand>
</feature>
<feature type="binding site" evidence="1">
    <location>
        <position position="96"/>
    </location>
    <ligand>
        <name>isopentenyl diphosphate</name>
        <dbReference type="ChEBI" id="CHEBI:128769"/>
    </ligand>
</feature>
<feature type="binding site" evidence="1">
    <location>
        <position position="157"/>
    </location>
    <ligand>
        <name>[4Fe-4S] cluster</name>
        <dbReference type="ChEBI" id="CHEBI:49883"/>
    </ligand>
</feature>
<feature type="binding site" evidence="1">
    <location>
        <position position="185"/>
    </location>
    <ligand>
        <name>(2E)-4-hydroxy-3-methylbut-2-enyl diphosphate</name>
        <dbReference type="ChEBI" id="CHEBI:128753"/>
    </ligand>
</feature>
<feature type="binding site" evidence="1">
    <location>
        <position position="185"/>
    </location>
    <ligand>
        <name>dimethylallyl diphosphate</name>
        <dbReference type="ChEBI" id="CHEBI:57623"/>
    </ligand>
</feature>
<feature type="binding site" evidence="1">
    <location>
        <position position="185"/>
    </location>
    <ligand>
        <name>isopentenyl diphosphate</name>
        <dbReference type="ChEBI" id="CHEBI:128769"/>
    </ligand>
</feature>
<feature type="binding site" evidence="1">
    <location>
        <position position="250"/>
    </location>
    <ligand>
        <name>(2E)-4-hydroxy-3-methylbut-2-enyl diphosphate</name>
        <dbReference type="ChEBI" id="CHEBI:128753"/>
    </ligand>
</feature>
<feature type="binding site" evidence="1">
    <location>
        <position position="288"/>
    </location>
    <ligand>
        <name>[4Fe-4S] cluster</name>
        <dbReference type="ChEBI" id="CHEBI:49883"/>
    </ligand>
</feature>
<feature type="binding site" evidence="1">
    <location>
        <position position="317"/>
    </location>
    <ligand>
        <name>(2E)-4-hydroxy-3-methylbut-2-enyl diphosphate</name>
        <dbReference type="ChEBI" id="CHEBI:128753"/>
    </ligand>
</feature>
<feature type="binding site" evidence="1">
    <location>
        <position position="317"/>
    </location>
    <ligand>
        <name>dimethylallyl diphosphate</name>
        <dbReference type="ChEBI" id="CHEBI:57623"/>
    </ligand>
</feature>
<feature type="binding site" evidence="1">
    <location>
        <position position="317"/>
    </location>
    <ligand>
        <name>isopentenyl diphosphate</name>
        <dbReference type="ChEBI" id="CHEBI:128769"/>
    </ligand>
</feature>
<feature type="binding site" evidence="1">
    <location>
        <position position="318"/>
    </location>
    <ligand>
        <name>(2E)-4-hydroxy-3-methylbut-2-enyl diphosphate</name>
        <dbReference type="ChEBI" id="CHEBI:128753"/>
    </ligand>
</feature>
<feature type="binding site" evidence="1">
    <location>
        <position position="318"/>
    </location>
    <ligand>
        <name>dimethylallyl diphosphate</name>
        <dbReference type="ChEBI" id="CHEBI:57623"/>
    </ligand>
</feature>
<feature type="binding site" evidence="1">
    <location>
        <position position="318"/>
    </location>
    <ligand>
        <name>isopentenyl diphosphate</name>
        <dbReference type="ChEBI" id="CHEBI:128769"/>
    </ligand>
</feature>
<feature type="binding site" evidence="1">
    <location>
        <position position="319"/>
    </location>
    <ligand>
        <name>(2E)-4-hydroxy-3-methylbut-2-enyl diphosphate</name>
        <dbReference type="ChEBI" id="CHEBI:128753"/>
    </ligand>
</feature>
<feature type="binding site" evidence="1">
    <location>
        <position position="319"/>
    </location>
    <ligand>
        <name>dimethylallyl diphosphate</name>
        <dbReference type="ChEBI" id="CHEBI:57623"/>
    </ligand>
</feature>
<feature type="binding site" evidence="1">
    <location>
        <position position="319"/>
    </location>
    <ligand>
        <name>isopentenyl diphosphate</name>
        <dbReference type="ChEBI" id="CHEBI:128769"/>
    </ligand>
</feature>
<feature type="binding site" evidence="1">
    <location>
        <position position="379"/>
    </location>
    <ligand>
        <name>(2E)-4-hydroxy-3-methylbut-2-enyl diphosphate</name>
        <dbReference type="ChEBI" id="CHEBI:128753"/>
    </ligand>
</feature>
<feature type="binding site" evidence="1">
    <location>
        <position position="379"/>
    </location>
    <ligand>
        <name>dimethylallyl diphosphate</name>
        <dbReference type="ChEBI" id="CHEBI:57623"/>
    </ligand>
</feature>
<feature type="binding site" evidence="1">
    <location>
        <position position="379"/>
    </location>
    <ligand>
        <name>isopentenyl diphosphate</name>
        <dbReference type="ChEBI" id="CHEBI:128769"/>
    </ligand>
</feature>
<reference key="1">
    <citation type="submission" date="2006-05" db="EMBL/GenBank/DDBJ databases">
        <authorList>
            <consortium name="Genoscope"/>
        </authorList>
    </citation>
    <scope>NUCLEOTIDE SEQUENCE [LARGE SCALE GENOMIC DNA]</scope>
    <source>
        <strain>WH7803</strain>
    </source>
</reference>
<organism>
    <name type="scientific">Synechococcus sp. (strain WH7803)</name>
    <dbReference type="NCBI Taxonomy" id="32051"/>
    <lineage>
        <taxon>Bacteria</taxon>
        <taxon>Bacillati</taxon>
        <taxon>Cyanobacteriota</taxon>
        <taxon>Cyanophyceae</taxon>
        <taxon>Synechococcales</taxon>
        <taxon>Synechococcaceae</taxon>
        <taxon>Synechococcus</taxon>
    </lineage>
</organism>